<gene>
    <name evidence="1" type="primary">smpB</name>
    <name type="ordered locus">Sez_1417</name>
</gene>
<evidence type="ECO:0000255" key="1">
    <source>
        <dbReference type="HAMAP-Rule" id="MF_00023"/>
    </source>
</evidence>
<name>SSRP_STREM</name>
<protein>
    <recommendedName>
        <fullName evidence="1">SsrA-binding protein</fullName>
    </recommendedName>
    <alternativeName>
        <fullName evidence="1">Small protein B</fullName>
    </alternativeName>
</protein>
<keyword id="KW-0963">Cytoplasm</keyword>
<keyword id="KW-0694">RNA-binding</keyword>
<dbReference type="EMBL" id="CP001129">
    <property type="protein sequence ID" value="ACG62751.1"/>
    <property type="molecule type" value="Genomic_DNA"/>
</dbReference>
<dbReference type="RefSeq" id="WP_012516013.1">
    <property type="nucleotide sequence ID" value="NC_011134.1"/>
</dbReference>
<dbReference type="SMR" id="B4U434"/>
<dbReference type="KEGG" id="sez:Sez_1417"/>
<dbReference type="HOGENOM" id="CLU_108953_0_0_9"/>
<dbReference type="Proteomes" id="UP000001873">
    <property type="component" value="Chromosome"/>
</dbReference>
<dbReference type="GO" id="GO:0005829">
    <property type="term" value="C:cytosol"/>
    <property type="evidence" value="ECO:0007669"/>
    <property type="project" value="TreeGrafter"/>
</dbReference>
<dbReference type="GO" id="GO:0003723">
    <property type="term" value="F:RNA binding"/>
    <property type="evidence" value="ECO:0007669"/>
    <property type="project" value="UniProtKB-UniRule"/>
</dbReference>
<dbReference type="GO" id="GO:0070929">
    <property type="term" value="P:trans-translation"/>
    <property type="evidence" value="ECO:0007669"/>
    <property type="project" value="UniProtKB-UniRule"/>
</dbReference>
<dbReference type="CDD" id="cd09294">
    <property type="entry name" value="SmpB"/>
    <property type="match status" value="1"/>
</dbReference>
<dbReference type="Gene3D" id="2.40.280.10">
    <property type="match status" value="1"/>
</dbReference>
<dbReference type="HAMAP" id="MF_00023">
    <property type="entry name" value="SmpB"/>
    <property type="match status" value="1"/>
</dbReference>
<dbReference type="InterPro" id="IPR023620">
    <property type="entry name" value="SmpB"/>
</dbReference>
<dbReference type="InterPro" id="IPR000037">
    <property type="entry name" value="SsrA-bd_prot"/>
</dbReference>
<dbReference type="InterPro" id="IPR020081">
    <property type="entry name" value="SsrA-bd_prot_CS"/>
</dbReference>
<dbReference type="NCBIfam" id="NF003843">
    <property type="entry name" value="PRK05422.1"/>
    <property type="match status" value="1"/>
</dbReference>
<dbReference type="NCBIfam" id="TIGR00086">
    <property type="entry name" value="smpB"/>
    <property type="match status" value="1"/>
</dbReference>
<dbReference type="PANTHER" id="PTHR30308:SF2">
    <property type="entry name" value="SSRA-BINDING PROTEIN"/>
    <property type="match status" value="1"/>
</dbReference>
<dbReference type="PANTHER" id="PTHR30308">
    <property type="entry name" value="TMRNA-BINDING COMPONENT OF TRANS-TRANSLATION TAGGING COMPLEX"/>
    <property type="match status" value="1"/>
</dbReference>
<dbReference type="Pfam" id="PF01668">
    <property type="entry name" value="SmpB"/>
    <property type="match status" value="1"/>
</dbReference>
<dbReference type="SUPFAM" id="SSF74982">
    <property type="entry name" value="Small protein B (SmpB)"/>
    <property type="match status" value="1"/>
</dbReference>
<dbReference type="PROSITE" id="PS01317">
    <property type="entry name" value="SSRP"/>
    <property type="match status" value="1"/>
</dbReference>
<accession>B4U434</accession>
<comment type="function">
    <text evidence="1">Required for rescue of stalled ribosomes mediated by trans-translation. Binds to transfer-messenger RNA (tmRNA), required for stable association of tmRNA with ribosomes. tmRNA and SmpB together mimic tRNA shape, replacing the anticodon stem-loop with SmpB. tmRNA is encoded by the ssrA gene; the 2 termini fold to resemble tRNA(Ala) and it encodes a 'tag peptide', a short internal open reading frame. During trans-translation Ala-aminoacylated tmRNA acts like a tRNA, entering the A-site of stalled ribosomes, displacing the stalled mRNA. The ribosome then switches to translate the ORF on the tmRNA; the nascent peptide is terminated with the 'tag peptide' encoded by the tmRNA and targeted for degradation. The ribosome is freed to recommence translation, which seems to be the essential function of trans-translation.</text>
</comment>
<comment type="subcellular location">
    <subcellularLocation>
        <location evidence="1">Cytoplasm</location>
    </subcellularLocation>
    <text evidence="1">The tmRNA-SmpB complex associates with stalled 70S ribosomes.</text>
</comment>
<comment type="similarity">
    <text evidence="1">Belongs to the SmpB family.</text>
</comment>
<organism>
    <name type="scientific">Streptococcus equi subsp. zooepidemicus (strain MGCS10565)</name>
    <dbReference type="NCBI Taxonomy" id="552526"/>
    <lineage>
        <taxon>Bacteria</taxon>
        <taxon>Bacillati</taxon>
        <taxon>Bacillota</taxon>
        <taxon>Bacilli</taxon>
        <taxon>Lactobacillales</taxon>
        <taxon>Streptococcaceae</taxon>
        <taxon>Streptococcus</taxon>
    </lineage>
</organism>
<sequence>MAKGEGNVLAQHKKARHDYHIVETIEAGIVLTGTEIKSVRAARIQLKDGFAQIKNGEAWLVNVHIAPFEQGNIWNADPERTRKLLLKKREIQHLADELKGTGMTLVPLKVYLKDGFAKVLIGLAKGKHDYDKRESIKRREQDRDIRRVMKSVNRR</sequence>
<reference key="1">
    <citation type="journal article" date="2008" name="PLoS ONE">
        <title>Genome sequence of a lancefield group C Streptococcus zooepidemicus strain causing epidemic nephritis: new information about an old disease.</title>
        <authorList>
            <person name="Beres S.B."/>
            <person name="Sesso R."/>
            <person name="Pinto S.W.L."/>
            <person name="Hoe N.P."/>
            <person name="Porcella S.F."/>
            <person name="Deleo F.R."/>
            <person name="Musser J.M."/>
        </authorList>
    </citation>
    <scope>NUCLEOTIDE SEQUENCE [LARGE SCALE GENOMIC DNA]</scope>
    <source>
        <strain>MGCS10565</strain>
    </source>
</reference>
<proteinExistence type="inferred from homology"/>
<feature type="chain" id="PRO_1000090188" description="SsrA-binding protein">
    <location>
        <begin position="1"/>
        <end position="155"/>
    </location>
</feature>